<dbReference type="EMBL" id="CP000891">
    <property type="protein sequence ID" value="ABX48635.1"/>
    <property type="molecule type" value="Genomic_DNA"/>
</dbReference>
<dbReference type="RefSeq" id="WP_006085228.1">
    <property type="nucleotide sequence ID" value="NC_009997.1"/>
</dbReference>
<dbReference type="SMR" id="A9KUI6"/>
<dbReference type="GeneID" id="11774670"/>
<dbReference type="KEGG" id="sbn:Sbal195_1462"/>
<dbReference type="HOGENOM" id="CLU_121866_0_0_6"/>
<dbReference type="Proteomes" id="UP000000770">
    <property type="component" value="Chromosome"/>
</dbReference>
<dbReference type="GO" id="GO:0009898">
    <property type="term" value="C:cytoplasmic side of plasma membrane"/>
    <property type="evidence" value="ECO:0007669"/>
    <property type="project" value="InterPro"/>
</dbReference>
<dbReference type="CDD" id="cd16323">
    <property type="entry name" value="Syd"/>
    <property type="match status" value="1"/>
</dbReference>
<dbReference type="Gene3D" id="3.40.1580.20">
    <property type="entry name" value="Syd protein"/>
    <property type="match status" value="1"/>
</dbReference>
<dbReference type="HAMAP" id="MF_01104">
    <property type="entry name" value="Syd"/>
    <property type="match status" value="1"/>
</dbReference>
<dbReference type="InterPro" id="IPR009948">
    <property type="entry name" value="Syd"/>
</dbReference>
<dbReference type="InterPro" id="IPR038228">
    <property type="entry name" value="Syd_sf"/>
</dbReference>
<dbReference type="NCBIfam" id="NF003439">
    <property type="entry name" value="PRK04968.1"/>
    <property type="match status" value="1"/>
</dbReference>
<dbReference type="Pfam" id="PF07348">
    <property type="entry name" value="Syd"/>
    <property type="match status" value="1"/>
</dbReference>
<protein>
    <recommendedName>
        <fullName evidence="1">Protein Syd</fullName>
    </recommendedName>
</protein>
<sequence length="216" mass="24641">MSCLPALDKFLQNYHQAYLTSLGELPRYYPQGEPSVCIQGEFHADLDQAVSWQPVKREVEGSFANVEHALELTLWPEINHFYGQYFSAPLLFDSKWGTGELLQVWNEDDFTCLQQNLIGHLMMKKKLKQPPTWFIGLLDEGDKMLTINNSDGSVWIELPGEIPTQQLSPSLAEFIGALSPRIAPPVKHEELPMPALEHPGIFASFKRMWQNLFGKR</sequence>
<comment type="function">
    <text evidence="1">Interacts with the SecY protein in vivo. May bind preferentially to an uncomplexed state of SecY, thus functioning either as a chelating agent for excess SecY in the cell or as a regulatory factor that negatively controls the translocase function.</text>
</comment>
<comment type="subcellular location">
    <subcellularLocation>
        <location evidence="1">Cell inner membrane</location>
        <topology evidence="1">Peripheral membrane protein</topology>
        <orientation evidence="1">Cytoplasmic side</orientation>
    </subcellularLocation>
    <text evidence="1">Loosely associated with the cytoplasmic side of the inner membrane, probably via SecY.</text>
</comment>
<comment type="similarity">
    <text evidence="1">Belongs to the Syd family.</text>
</comment>
<name>SYDP_SHEB9</name>
<proteinExistence type="inferred from homology"/>
<organism>
    <name type="scientific">Shewanella baltica (strain OS195)</name>
    <dbReference type="NCBI Taxonomy" id="399599"/>
    <lineage>
        <taxon>Bacteria</taxon>
        <taxon>Pseudomonadati</taxon>
        <taxon>Pseudomonadota</taxon>
        <taxon>Gammaproteobacteria</taxon>
        <taxon>Alteromonadales</taxon>
        <taxon>Shewanellaceae</taxon>
        <taxon>Shewanella</taxon>
    </lineage>
</organism>
<accession>A9KUI6</accession>
<keyword id="KW-0997">Cell inner membrane</keyword>
<keyword id="KW-1003">Cell membrane</keyword>
<keyword id="KW-0472">Membrane</keyword>
<gene>
    <name evidence="1" type="primary">syd</name>
    <name type="ordered locus">Sbal195_1462</name>
</gene>
<evidence type="ECO:0000255" key="1">
    <source>
        <dbReference type="HAMAP-Rule" id="MF_01104"/>
    </source>
</evidence>
<feature type="chain" id="PRO_1000084804" description="Protein Syd">
    <location>
        <begin position="1"/>
        <end position="216"/>
    </location>
</feature>
<reference key="1">
    <citation type="submission" date="2007-11" db="EMBL/GenBank/DDBJ databases">
        <title>Complete sequence of chromosome of Shewanella baltica OS195.</title>
        <authorList>
            <consortium name="US DOE Joint Genome Institute"/>
            <person name="Copeland A."/>
            <person name="Lucas S."/>
            <person name="Lapidus A."/>
            <person name="Barry K."/>
            <person name="Glavina del Rio T."/>
            <person name="Dalin E."/>
            <person name="Tice H."/>
            <person name="Pitluck S."/>
            <person name="Chain P."/>
            <person name="Malfatti S."/>
            <person name="Shin M."/>
            <person name="Vergez L."/>
            <person name="Schmutz J."/>
            <person name="Larimer F."/>
            <person name="Land M."/>
            <person name="Hauser L."/>
            <person name="Kyrpides N."/>
            <person name="Kim E."/>
            <person name="Brettar I."/>
            <person name="Rodrigues J."/>
            <person name="Konstantinidis K."/>
            <person name="Klappenbach J."/>
            <person name="Hofle M."/>
            <person name="Tiedje J."/>
            <person name="Richardson P."/>
        </authorList>
    </citation>
    <scope>NUCLEOTIDE SEQUENCE [LARGE SCALE GENOMIC DNA]</scope>
    <source>
        <strain>OS195</strain>
    </source>
</reference>